<sequence>MHQVISATTNPAKIQAILQAFEEIFGEGSCHITPVAVESGVPEQPFGSEETRAGARNRVDNAQRLHPQADFWVAIEAGIDDDATFSWVVIDNGVQRGEARSATLPLPAVILDRVRQGEALGPVMSHYTGIDEIGRKEGAIGVFTAGKLTRSSVYYQAVILALSPFHNAVYR</sequence>
<comment type="function">
    <text evidence="1">Phosphatase that hydrolyzes non-canonical purine nucleotides such as XTP and ITP to their respective diphosphate derivatives. Probably excludes non-canonical purines from DNA/RNA precursor pool, thus preventing their incorporation into DNA/RNA and avoiding chromosomal lesions.</text>
</comment>
<comment type="catalytic activity">
    <reaction evidence="1">
        <text>XTP + H2O = XDP + phosphate + H(+)</text>
        <dbReference type="Rhea" id="RHEA:28406"/>
        <dbReference type="ChEBI" id="CHEBI:15377"/>
        <dbReference type="ChEBI" id="CHEBI:15378"/>
        <dbReference type="ChEBI" id="CHEBI:43474"/>
        <dbReference type="ChEBI" id="CHEBI:59884"/>
        <dbReference type="ChEBI" id="CHEBI:61314"/>
        <dbReference type="EC" id="3.6.1.73"/>
    </reaction>
</comment>
<comment type="catalytic activity">
    <reaction evidence="1">
        <text>ITP + H2O = IDP + phosphate + H(+)</text>
        <dbReference type="Rhea" id="RHEA:28330"/>
        <dbReference type="ChEBI" id="CHEBI:15377"/>
        <dbReference type="ChEBI" id="CHEBI:15378"/>
        <dbReference type="ChEBI" id="CHEBI:43474"/>
        <dbReference type="ChEBI" id="CHEBI:58280"/>
        <dbReference type="ChEBI" id="CHEBI:61402"/>
        <dbReference type="EC" id="3.6.1.73"/>
    </reaction>
</comment>
<comment type="cofactor">
    <cofactor evidence="1">
        <name>Mg(2+)</name>
        <dbReference type="ChEBI" id="CHEBI:18420"/>
    </cofactor>
    <cofactor evidence="1">
        <name>Mn(2+)</name>
        <dbReference type="ChEBI" id="CHEBI:29035"/>
    </cofactor>
    <text evidence="1">Binds 1 divalent metal cation per subunit; can use either Mg(2+) or Mn(2+).</text>
</comment>
<comment type="subunit">
    <text evidence="1">Homodimer.</text>
</comment>
<comment type="similarity">
    <text evidence="1">Belongs to the YjjX NTPase family.</text>
</comment>
<name>NCPP_SALCH</name>
<keyword id="KW-0378">Hydrolase</keyword>
<keyword id="KW-0460">Magnesium</keyword>
<keyword id="KW-0464">Manganese</keyword>
<keyword id="KW-0479">Metal-binding</keyword>
<keyword id="KW-0546">Nucleotide metabolism</keyword>
<keyword id="KW-0547">Nucleotide-binding</keyword>
<proteinExistence type="inferred from homology"/>
<feature type="chain" id="PRO_0000156346" description="Inosine/xanthosine triphosphatase">
    <location>
        <begin position="1"/>
        <end position="171"/>
    </location>
</feature>
<feature type="binding site" evidence="1">
    <location>
        <begin position="8"/>
        <end position="13"/>
    </location>
    <ligand>
        <name>substrate</name>
    </ligand>
</feature>
<feature type="binding site" evidence="1">
    <location>
        <position position="38"/>
    </location>
    <ligand>
        <name>Mg(2+)</name>
        <dbReference type="ChEBI" id="CHEBI:18420"/>
    </ligand>
</feature>
<feature type="binding site" evidence="1">
    <location>
        <position position="68"/>
    </location>
    <ligand>
        <name>Mg(2+)</name>
        <dbReference type="ChEBI" id="CHEBI:18420"/>
    </ligand>
</feature>
<protein>
    <recommendedName>
        <fullName evidence="1">Inosine/xanthosine triphosphatase</fullName>
        <shortName evidence="1">ITPase/XTPase</shortName>
        <ecNumber evidence="1">3.6.1.73</ecNumber>
    </recommendedName>
    <alternativeName>
        <fullName evidence="1">Non-canonical purine NTP phosphatase</fullName>
    </alternativeName>
    <alternativeName>
        <fullName evidence="1">Non-standard purine NTP phosphatase</fullName>
    </alternativeName>
    <alternativeName>
        <fullName evidence="1">Nucleoside-triphosphate phosphatase</fullName>
        <shortName evidence="1">NTPase</shortName>
    </alternativeName>
</protein>
<accession>Q57G27</accession>
<evidence type="ECO:0000255" key="1">
    <source>
        <dbReference type="HAMAP-Rule" id="MF_00648"/>
    </source>
</evidence>
<dbReference type="EC" id="3.6.1.73" evidence="1"/>
<dbReference type="EMBL" id="AE017220">
    <property type="protein sequence ID" value="AAX68335.1"/>
    <property type="molecule type" value="Genomic_DNA"/>
</dbReference>
<dbReference type="RefSeq" id="WP_000554305.1">
    <property type="nucleotide sequence ID" value="NC_006905.1"/>
</dbReference>
<dbReference type="SMR" id="Q57G27"/>
<dbReference type="KEGG" id="sec:SCH_4429"/>
<dbReference type="HOGENOM" id="CLU_087417_1_0_6"/>
<dbReference type="Proteomes" id="UP000000538">
    <property type="component" value="Chromosome"/>
</dbReference>
<dbReference type="GO" id="GO:0103023">
    <property type="term" value="F:ITPase activity"/>
    <property type="evidence" value="ECO:0007669"/>
    <property type="project" value="UniProtKB-EC"/>
</dbReference>
<dbReference type="GO" id="GO:0046872">
    <property type="term" value="F:metal ion binding"/>
    <property type="evidence" value="ECO:0007669"/>
    <property type="project" value="UniProtKB-KW"/>
</dbReference>
<dbReference type="GO" id="GO:0000166">
    <property type="term" value="F:nucleotide binding"/>
    <property type="evidence" value="ECO:0007669"/>
    <property type="project" value="UniProtKB-KW"/>
</dbReference>
<dbReference type="GO" id="GO:0017111">
    <property type="term" value="F:ribonucleoside triphosphate phosphatase activity"/>
    <property type="evidence" value="ECO:0000250"/>
    <property type="project" value="UniProtKB"/>
</dbReference>
<dbReference type="GO" id="GO:0009117">
    <property type="term" value="P:nucleotide metabolic process"/>
    <property type="evidence" value="ECO:0007669"/>
    <property type="project" value="UniProtKB-KW"/>
</dbReference>
<dbReference type="GO" id="GO:0006772">
    <property type="term" value="P:thiamine metabolic process"/>
    <property type="evidence" value="ECO:0007669"/>
    <property type="project" value="TreeGrafter"/>
</dbReference>
<dbReference type="FunFam" id="3.90.950.10:FF:000002">
    <property type="entry name" value="Inosine/xanthosine triphosphatase"/>
    <property type="match status" value="1"/>
</dbReference>
<dbReference type="Gene3D" id="3.90.950.10">
    <property type="match status" value="1"/>
</dbReference>
<dbReference type="HAMAP" id="MF_00648">
    <property type="entry name" value="Non_canon_purine_NTPase_YjjX"/>
    <property type="match status" value="1"/>
</dbReference>
<dbReference type="InterPro" id="IPR029001">
    <property type="entry name" value="ITPase-like_fam"/>
</dbReference>
<dbReference type="InterPro" id="IPR002786">
    <property type="entry name" value="Non_canon_purine_NTPase"/>
</dbReference>
<dbReference type="InterPro" id="IPR026533">
    <property type="entry name" value="NTPase/PRRC1"/>
</dbReference>
<dbReference type="InterPro" id="IPR050299">
    <property type="entry name" value="YjjX_NTPase"/>
</dbReference>
<dbReference type="NCBIfam" id="TIGR00258">
    <property type="entry name" value="inosine/xanthosine triphosphatase"/>
    <property type="match status" value="1"/>
</dbReference>
<dbReference type="NCBIfam" id="NF003459">
    <property type="entry name" value="PRK05074.1"/>
    <property type="match status" value="1"/>
</dbReference>
<dbReference type="PANTHER" id="PTHR34699">
    <property type="match status" value="1"/>
</dbReference>
<dbReference type="PANTHER" id="PTHR34699:SF2">
    <property type="entry name" value="NON-CANONICAL PURINE NTP PHOSPHATASE_PRRC1 DOMAIN-CONTAINING PROTEIN"/>
    <property type="match status" value="1"/>
</dbReference>
<dbReference type="Pfam" id="PF01931">
    <property type="entry name" value="NTPase_I-T"/>
    <property type="match status" value="1"/>
</dbReference>
<dbReference type="SUPFAM" id="SSF52972">
    <property type="entry name" value="ITPase-like"/>
    <property type="match status" value="1"/>
</dbReference>
<gene>
    <name type="primary">yjjX</name>
    <name type="ordered locus">SCH_4429</name>
</gene>
<reference key="1">
    <citation type="journal article" date="2005" name="Nucleic Acids Res.">
        <title>The genome sequence of Salmonella enterica serovar Choleraesuis, a highly invasive and resistant zoonotic pathogen.</title>
        <authorList>
            <person name="Chiu C.-H."/>
            <person name="Tang P."/>
            <person name="Chu C."/>
            <person name="Hu S."/>
            <person name="Bao Q."/>
            <person name="Yu J."/>
            <person name="Chou Y.-Y."/>
            <person name="Wang H.-S."/>
            <person name="Lee Y.-S."/>
        </authorList>
    </citation>
    <scope>NUCLEOTIDE SEQUENCE [LARGE SCALE GENOMIC DNA]</scope>
    <source>
        <strain>SC-B67</strain>
    </source>
</reference>
<organism>
    <name type="scientific">Salmonella choleraesuis (strain SC-B67)</name>
    <dbReference type="NCBI Taxonomy" id="321314"/>
    <lineage>
        <taxon>Bacteria</taxon>
        <taxon>Pseudomonadati</taxon>
        <taxon>Pseudomonadota</taxon>
        <taxon>Gammaproteobacteria</taxon>
        <taxon>Enterobacterales</taxon>
        <taxon>Enterobacteriaceae</taxon>
        <taxon>Salmonella</taxon>
    </lineage>
</organism>